<keyword id="KW-0002">3D-structure</keyword>
<keyword id="KW-0046">Antibiotic resistance</keyword>
<keyword id="KW-0067">ATP-binding</keyword>
<keyword id="KW-0119">Carbohydrate metabolism</keyword>
<keyword id="KW-0418">Kinase</keyword>
<keyword id="KW-0547">Nucleotide-binding</keyword>
<keyword id="KW-1185">Reference proteome</keyword>
<keyword id="KW-0808">Transferase</keyword>
<evidence type="ECO:0000255" key="1">
    <source>
        <dbReference type="HAMAP-Rule" id="MF_01270"/>
    </source>
</evidence>
<evidence type="ECO:0000269" key="2">
    <source>
    </source>
</evidence>
<evidence type="ECO:0000303" key="3">
    <source>
    </source>
</evidence>
<evidence type="ECO:0007829" key="4">
    <source>
        <dbReference type="PDB" id="4MO4"/>
    </source>
</evidence>
<evidence type="ECO:0007829" key="5">
    <source>
        <dbReference type="PDB" id="8CP9"/>
    </source>
</evidence>
<evidence type="ECO:0007829" key="6">
    <source>
        <dbReference type="PDB" id="8CPB"/>
    </source>
</evidence>
<gene>
    <name evidence="1 3" type="primary">anmK</name>
    <name type="ordered locus">PA0666</name>
</gene>
<name>ANMK_PSEAE</name>
<protein>
    <recommendedName>
        <fullName evidence="1">Anhydro-N-acetylmuramic acid kinase</fullName>
        <ecNumber evidence="1">2.7.1.170</ecNumber>
    </recommendedName>
    <alternativeName>
        <fullName evidence="1 3">AnhMurNAc kinase</fullName>
    </alternativeName>
</protein>
<feature type="chain" id="PRO_0000250028" description="Anhydro-N-acetylmuramic acid kinase">
    <location>
        <begin position="1"/>
        <end position="363"/>
    </location>
</feature>
<feature type="binding site" evidence="1">
    <location>
        <begin position="10"/>
        <end position="17"/>
    </location>
    <ligand>
        <name>ATP</name>
        <dbReference type="ChEBI" id="CHEBI:30616"/>
    </ligand>
</feature>
<feature type="strand" evidence="4">
    <location>
        <begin position="3"/>
        <end position="8"/>
    </location>
</feature>
<feature type="strand" evidence="4">
    <location>
        <begin position="14"/>
        <end position="36"/>
    </location>
</feature>
<feature type="helix" evidence="4">
    <location>
        <begin position="39"/>
        <end position="46"/>
    </location>
</feature>
<feature type="helix" evidence="4">
    <location>
        <begin position="55"/>
        <end position="80"/>
    </location>
</feature>
<feature type="helix" evidence="4">
    <location>
        <begin position="85"/>
        <end position="87"/>
    </location>
</feature>
<feature type="strand" evidence="4">
    <location>
        <begin position="90"/>
        <end position="93"/>
    </location>
</feature>
<feature type="strand" evidence="4">
    <location>
        <begin position="96"/>
        <end position="101"/>
    </location>
</feature>
<feature type="helix" evidence="4">
    <location>
        <begin position="102"/>
        <end position="104"/>
    </location>
</feature>
<feature type="strand" evidence="4">
    <location>
        <begin position="106"/>
        <end position="110"/>
    </location>
</feature>
<feature type="helix" evidence="4">
    <location>
        <begin position="113"/>
        <end position="120"/>
    </location>
</feature>
<feature type="strand" evidence="4">
    <location>
        <begin position="124"/>
        <end position="126"/>
    </location>
</feature>
<feature type="helix" evidence="4">
    <location>
        <begin position="130"/>
        <end position="134"/>
    </location>
</feature>
<feature type="helix" evidence="4">
    <location>
        <begin position="143"/>
        <end position="151"/>
    </location>
</feature>
<feature type="strand" evidence="4">
    <location>
        <begin position="154"/>
        <end position="156"/>
    </location>
</feature>
<feature type="strand" evidence="4">
    <location>
        <begin position="158"/>
        <end position="172"/>
    </location>
</feature>
<feature type="strand" evidence="5">
    <location>
        <begin position="174"/>
        <end position="176"/>
    </location>
</feature>
<feature type="strand" evidence="4">
    <location>
        <begin position="179"/>
        <end position="185"/>
    </location>
</feature>
<feature type="helix" evidence="4">
    <location>
        <begin position="188"/>
        <end position="198"/>
    </location>
</feature>
<feature type="helix" evidence="4">
    <location>
        <begin position="204"/>
        <end position="206"/>
    </location>
</feature>
<feature type="helix" evidence="4">
    <location>
        <begin position="207"/>
        <end position="211"/>
    </location>
</feature>
<feature type="helix" evidence="4">
    <location>
        <begin position="216"/>
        <end position="223"/>
    </location>
</feature>
<feature type="helix" evidence="6">
    <location>
        <begin position="226"/>
        <end position="229"/>
    </location>
</feature>
<feature type="turn" evidence="6">
    <location>
        <begin position="238"/>
        <end position="240"/>
    </location>
</feature>
<feature type="helix" evidence="4">
    <location>
        <begin position="243"/>
        <end position="250"/>
    </location>
</feature>
<feature type="helix" evidence="4">
    <location>
        <begin position="258"/>
        <end position="280"/>
    </location>
</feature>
<feature type="strand" evidence="4">
    <location>
        <begin position="286"/>
        <end position="291"/>
    </location>
</feature>
<feature type="helix" evidence="4">
    <location>
        <begin position="292"/>
        <end position="295"/>
    </location>
</feature>
<feature type="helix" evidence="4">
    <location>
        <begin position="297"/>
        <end position="306"/>
    </location>
</feature>
<feature type="strand" evidence="4">
    <location>
        <begin position="310"/>
        <end position="314"/>
    </location>
</feature>
<feature type="helix" evidence="4">
    <location>
        <begin position="315"/>
        <end position="318"/>
    </location>
</feature>
<feature type="helix" evidence="4">
    <location>
        <begin position="322"/>
        <end position="324"/>
    </location>
</feature>
<feature type="helix" evidence="4">
    <location>
        <begin position="325"/>
        <end position="338"/>
    </location>
</feature>
<feature type="helix" evidence="4">
    <location>
        <begin position="346"/>
        <end position="349"/>
    </location>
</feature>
<feature type="strand" evidence="4">
    <location>
        <begin position="359"/>
        <end position="361"/>
    </location>
</feature>
<reference key="1">
    <citation type="journal article" date="2000" name="Nature">
        <title>Complete genome sequence of Pseudomonas aeruginosa PAO1, an opportunistic pathogen.</title>
        <authorList>
            <person name="Stover C.K."/>
            <person name="Pham X.-Q.T."/>
            <person name="Erwin A.L."/>
            <person name="Mizoguchi S.D."/>
            <person name="Warrener P."/>
            <person name="Hickey M.J."/>
            <person name="Brinkman F.S.L."/>
            <person name="Hufnagle W.O."/>
            <person name="Kowalik D.J."/>
            <person name="Lagrou M."/>
            <person name="Garber R.L."/>
            <person name="Goltry L."/>
            <person name="Tolentino E."/>
            <person name="Westbrock-Wadman S."/>
            <person name="Yuan Y."/>
            <person name="Brody L.L."/>
            <person name="Coulter S.N."/>
            <person name="Folger K.R."/>
            <person name="Kas A."/>
            <person name="Larbig K."/>
            <person name="Lim R.M."/>
            <person name="Smith K.A."/>
            <person name="Spencer D.H."/>
            <person name="Wong G.K.-S."/>
            <person name="Wu Z."/>
            <person name="Paulsen I.T."/>
            <person name="Reizer J."/>
            <person name="Saier M.H. Jr."/>
            <person name="Hancock R.E.W."/>
            <person name="Lory S."/>
            <person name="Olson M.V."/>
        </authorList>
    </citation>
    <scope>NUCLEOTIDE SEQUENCE [LARGE SCALE GENOMIC DNA]</scope>
    <source>
        <strain>ATCC 15692 / DSM 22644 / CIP 104116 / JCM 14847 / LMG 12228 / 1C / PRS 101 / PAO1</strain>
    </source>
</reference>
<reference key="2">
    <citation type="journal article" date="2014" name="Microb. Drug Resist.">
        <title>Blocking peptidoglycan recycling in Pseudomonas aeruginosa attenuates intrinsic resistance to fosfomycin.</title>
        <authorList>
            <person name="Borisova M."/>
            <person name="Gisin J."/>
            <person name="Mayer C."/>
        </authorList>
    </citation>
    <scope>FUNCTION</scope>
    <scope>DISRUPTION PHENOTYPE</scope>
    <scope>PATHWAY</scope>
    <source>
        <strain>ATCC 15692 / DSM 22644 / CIP 104116 / JCM 14847 / LMG 12228 / 1C / PRS 101 / PAO1</strain>
    </source>
</reference>
<comment type="function">
    <text evidence="1 2">Catalyzes the specific phosphorylation of 1,6-anhydro-N-acetylmuramic acid (anhMurNAc) with the simultaneous cleavage of the 1,6-anhydro ring, generating MurNAc-6-P (By similarity). Is required for the utilization of anhMurNAc either imported from the medium or derived from its own cell wall murein, and thus plays a role in cell wall recycling. Contributes to intrinsic fosfomycin resistance in P.aeruginosa (PubMed:24819062).</text>
</comment>
<comment type="catalytic activity">
    <reaction evidence="1">
        <text>1,6-anhydro-N-acetyl-beta-muramate + ATP + H2O = N-acetyl-D-muramate 6-phosphate + ADP + H(+)</text>
        <dbReference type="Rhea" id="RHEA:24952"/>
        <dbReference type="ChEBI" id="CHEBI:15377"/>
        <dbReference type="ChEBI" id="CHEBI:15378"/>
        <dbReference type="ChEBI" id="CHEBI:30616"/>
        <dbReference type="ChEBI" id="CHEBI:58690"/>
        <dbReference type="ChEBI" id="CHEBI:58722"/>
        <dbReference type="ChEBI" id="CHEBI:456216"/>
        <dbReference type="EC" id="2.7.1.170"/>
    </reaction>
</comment>
<comment type="pathway">
    <text evidence="1 2">Amino-sugar metabolism; 1,6-anhydro-N-acetylmuramate degradation.</text>
</comment>
<comment type="pathway">
    <text evidence="1 2">Cell wall biogenesis; peptidoglycan recycling.</text>
</comment>
<comment type="disruption phenotype">
    <text evidence="2">Cells lacking this gene accumulate anhMurNAc. Deletion of this gene increases fosfomycin sensitivity. Growth rate is not affected.</text>
</comment>
<comment type="similarity">
    <text evidence="1">Belongs to the anhydro-N-acetylmuramic acid kinase family.</text>
</comment>
<sequence>MPRYLGLMSGTSLDGMDIVLIEQGDRTTLLASHYLPMPAGLREDILALCVPGPDEIARAAEVEQRWVALAAQGVRELLLQQQMSPDEVRAIGSHGQTIRHEPARHFTVQIGNPALLAELTGIDVVADFRRRDVAAGGQGAPLVPAFHQALFGDDDTSRAVLNIGGFSNVSLLSPGKPVRGFDCGPGNVLMDAWIHHQRGEHFDRDGAWAASGQVNHALLASLLADEFFAARGPKSTGRERFNLPWLQEHLARHPALPAADIQATLLELSARSISESLLDAQPDCEEVLVCGGGAFNTALMKRLAMLMPEARVASTDEYGIPPAWMEGMAFAWLAHRFLERLPGNCPDVTGALGPRTLGALYPA</sequence>
<proteinExistence type="evidence at protein level"/>
<organism>
    <name type="scientific">Pseudomonas aeruginosa (strain ATCC 15692 / DSM 22644 / CIP 104116 / JCM 14847 / LMG 12228 / 1C / PRS 101 / PAO1)</name>
    <dbReference type="NCBI Taxonomy" id="208964"/>
    <lineage>
        <taxon>Bacteria</taxon>
        <taxon>Pseudomonadati</taxon>
        <taxon>Pseudomonadota</taxon>
        <taxon>Gammaproteobacteria</taxon>
        <taxon>Pseudomonadales</taxon>
        <taxon>Pseudomonadaceae</taxon>
        <taxon>Pseudomonas</taxon>
    </lineage>
</organism>
<dbReference type="EC" id="2.7.1.170" evidence="1"/>
<dbReference type="EMBL" id="AE004091">
    <property type="protein sequence ID" value="AAG04055.1"/>
    <property type="molecule type" value="Genomic_DNA"/>
</dbReference>
<dbReference type="PIR" id="A83563">
    <property type="entry name" value="A83563"/>
</dbReference>
<dbReference type="RefSeq" id="NP_249357.1">
    <property type="nucleotide sequence ID" value="NC_002516.2"/>
</dbReference>
<dbReference type="RefSeq" id="WP_003113168.1">
    <property type="nucleotide sequence ID" value="NZ_QZGE01000010.1"/>
</dbReference>
<dbReference type="PDB" id="3QBW">
    <property type="method" value="X-ray"/>
    <property type="resolution" value="2.23 A"/>
    <property type="chains" value="A/B=1-363"/>
</dbReference>
<dbReference type="PDB" id="3QBX">
    <property type="method" value="X-ray"/>
    <property type="resolution" value="2.10 A"/>
    <property type="chains" value="A/B=1-363"/>
</dbReference>
<dbReference type="PDB" id="4MO4">
    <property type="method" value="X-ray"/>
    <property type="resolution" value="1.67 A"/>
    <property type="chains" value="A/B/C/D=1-363"/>
</dbReference>
<dbReference type="PDB" id="4MO5">
    <property type="method" value="X-ray"/>
    <property type="resolution" value="1.75 A"/>
    <property type="chains" value="A/B/C/D=1-363"/>
</dbReference>
<dbReference type="PDB" id="8BRE">
    <property type="method" value="X-ray"/>
    <property type="resolution" value="2.00 A"/>
    <property type="chains" value="A/B=1-363"/>
</dbReference>
<dbReference type="PDB" id="8C0U">
    <property type="method" value="X-ray"/>
    <property type="resolution" value="2.11 A"/>
    <property type="chains" value="A/B=1-363"/>
</dbReference>
<dbReference type="PDB" id="8CP9">
    <property type="method" value="X-ray"/>
    <property type="resolution" value="2.20 A"/>
    <property type="chains" value="A/B=1-363"/>
</dbReference>
<dbReference type="PDB" id="8CPB">
    <property type="method" value="X-ray"/>
    <property type="resolution" value="1.70 A"/>
    <property type="chains" value="A/B=1-363"/>
</dbReference>
<dbReference type="PDBsum" id="3QBW"/>
<dbReference type="PDBsum" id="3QBX"/>
<dbReference type="PDBsum" id="4MO4"/>
<dbReference type="PDBsum" id="4MO5"/>
<dbReference type="PDBsum" id="8BRE"/>
<dbReference type="PDBsum" id="8C0U"/>
<dbReference type="PDBsum" id="8CP9"/>
<dbReference type="PDBsum" id="8CPB"/>
<dbReference type="SMR" id="Q9I5Q5"/>
<dbReference type="FunCoup" id="Q9I5Q5">
    <property type="interactions" value="65"/>
</dbReference>
<dbReference type="STRING" id="208964.PA0666"/>
<dbReference type="PaxDb" id="208964-PA0666"/>
<dbReference type="DNASU" id="882072"/>
<dbReference type="GeneID" id="882072"/>
<dbReference type="KEGG" id="pae:PA0666"/>
<dbReference type="PATRIC" id="fig|208964.12.peg.697"/>
<dbReference type="PseudoCAP" id="PA0666"/>
<dbReference type="HOGENOM" id="CLU_038782_0_0_6"/>
<dbReference type="InParanoid" id="Q9I5Q5"/>
<dbReference type="OrthoDB" id="9763949at2"/>
<dbReference type="PhylomeDB" id="Q9I5Q5"/>
<dbReference type="BioCyc" id="MetaCyc:MONOMER-20215"/>
<dbReference type="BioCyc" id="PAER208964:G1FZ6-671-MONOMER"/>
<dbReference type="BRENDA" id="2.7.1.170">
    <property type="organism ID" value="5087"/>
</dbReference>
<dbReference type="UniPathway" id="UPA00343"/>
<dbReference type="UniPathway" id="UPA00544"/>
<dbReference type="EvolutionaryTrace" id="Q9I5Q5"/>
<dbReference type="Proteomes" id="UP000002438">
    <property type="component" value="Chromosome"/>
</dbReference>
<dbReference type="GO" id="GO:0005524">
    <property type="term" value="F:ATP binding"/>
    <property type="evidence" value="ECO:0007669"/>
    <property type="project" value="UniProtKB-UniRule"/>
</dbReference>
<dbReference type="GO" id="GO:0016301">
    <property type="term" value="F:kinase activity"/>
    <property type="evidence" value="ECO:0000318"/>
    <property type="project" value="GO_Central"/>
</dbReference>
<dbReference type="GO" id="GO:0016773">
    <property type="term" value="F:phosphotransferase activity, alcohol group as acceptor"/>
    <property type="evidence" value="ECO:0007669"/>
    <property type="project" value="UniProtKB-UniRule"/>
</dbReference>
<dbReference type="GO" id="GO:0097175">
    <property type="term" value="P:1,6-anhydro-N-acetyl-beta-muramic acid catabolic process"/>
    <property type="evidence" value="ECO:0007669"/>
    <property type="project" value="UniProtKB-UniRule"/>
</dbReference>
<dbReference type="GO" id="GO:0006040">
    <property type="term" value="P:amino sugar metabolic process"/>
    <property type="evidence" value="ECO:0007669"/>
    <property type="project" value="InterPro"/>
</dbReference>
<dbReference type="GO" id="GO:0009254">
    <property type="term" value="P:peptidoglycan turnover"/>
    <property type="evidence" value="ECO:0007669"/>
    <property type="project" value="UniProtKB-UniRule"/>
</dbReference>
<dbReference type="GO" id="GO:0046677">
    <property type="term" value="P:response to antibiotic"/>
    <property type="evidence" value="ECO:0007669"/>
    <property type="project" value="UniProtKB-KW"/>
</dbReference>
<dbReference type="CDD" id="cd24050">
    <property type="entry name" value="ASKHA_NBD_ANMK"/>
    <property type="match status" value="1"/>
</dbReference>
<dbReference type="Gene3D" id="3.30.420.40">
    <property type="match status" value="2"/>
</dbReference>
<dbReference type="HAMAP" id="MF_01270">
    <property type="entry name" value="AnhMurNAc_kinase"/>
    <property type="match status" value="1"/>
</dbReference>
<dbReference type="InterPro" id="IPR005338">
    <property type="entry name" value="Anhydro_N_Ac-Mur_kinase"/>
</dbReference>
<dbReference type="InterPro" id="IPR043129">
    <property type="entry name" value="ATPase_NBD"/>
</dbReference>
<dbReference type="NCBIfam" id="NF007139">
    <property type="entry name" value="PRK09585.1-3"/>
    <property type="match status" value="1"/>
</dbReference>
<dbReference type="PANTHER" id="PTHR30605">
    <property type="entry name" value="ANHYDRO-N-ACETYLMURAMIC ACID KINASE"/>
    <property type="match status" value="1"/>
</dbReference>
<dbReference type="PANTHER" id="PTHR30605:SF0">
    <property type="entry name" value="ANHYDRO-N-ACETYLMURAMIC ACID KINASE"/>
    <property type="match status" value="1"/>
</dbReference>
<dbReference type="Pfam" id="PF03702">
    <property type="entry name" value="AnmK"/>
    <property type="match status" value="1"/>
</dbReference>
<dbReference type="SUPFAM" id="SSF53067">
    <property type="entry name" value="Actin-like ATPase domain"/>
    <property type="match status" value="1"/>
</dbReference>
<accession>Q9I5Q5</accession>